<organism>
    <name type="scientific">Drosophila sechellia</name>
    <name type="common">Fruit fly</name>
    <dbReference type="NCBI Taxonomy" id="7238"/>
    <lineage>
        <taxon>Eukaryota</taxon>
        <taxon>Metazoa</taxon>
        <taxon>Ecdysozoa</taxon>
        <taxon>Arthropoda</taxon>
        <taxon>Hexapoda</taxon>
        <taxon>Insecta</taxon>
        <taxon>Pterygota</taxon>
        <taxon>Neoptera</taxon>
        <taxon>Endopterygota</taxon>
        <taxon>Diptera</taxon>
        <taxon>Brachycera</taxon>
        <taxon>Muscomorpha</taxon>
        <taxon>Ephydroidea</taxon>
        <taxon>Drosophilidae</taxon>
        <taxon>Drosophila</taxon>
        <taxon>Sophophora</taxon>
    </lineage>
</organism>
<accession>B4HIJ8</accession>
<gene>
    <name evidence="1" type="primary">flower</name>
    <name type="ORF">GM24464</name>
</gene>
<sequence length="194" mass="20650">MSFAEKITGLLARPNQQDPIGPEQPWYLKYGSRLLGIVAAFFAILFGLWNVFSIITLSVSCLVAGIIQMVAGFVVMLLEALCCFVCFEQVNVIADKVDSKPLYFRAGLYIAMAIPPIILCFGLASLFGSGLIFGTGVVYGMMALGKKASAEDMRAAAQQTFGGNTPAQTNDRAGIVNNAQPFSFTGAVGTDSNV</sequence>
<feature type="chain" id="PRO_0000389237" description="Calcium channel flower">
    <location>
        <begin position="1"/>
        <end position="194"/>
    </location>
</feature>
<feature type="transmembrane region" description="Helical" evidence="2">
    <location>
        <begin position="35"/>
        <end position="55"/>
    </location>
</feature>
<feature type="transmembrane region" description="Helical" evidence="2">
    <location>
        <begin position="66"/>
        <end position="88"/>
    </location>
</feature>
<feature type="transmembrane region" description="Helical" evidence="2">
    <location>
        <begin position="107"/>
        <end position="127"/>
    </location>
</feature>
<feature type="site" description="Calcium ion selectivity" evidence="1">
    <location>
        <position position="79"/>
    </location>
</feature>
<evidence type="ECO:0000250" key="1">
    <source>
        <dbReference type="UniProtKB" id="Q95T12"/>
    </source>
</evidence>
<evidence type="ECO:0000255" key="2"/>
<evidence type="ECO:0000305" key="3"/>
<evidence type="ECO:0000312" key="4">
    <source>
        <dbReference type="EMBL" id="EDW41628.1"/>
    </source>
</evidence>
<protein>
    <recommendedName>
        <fullName evidence="1">Calcium channel flower</fullName>
    </recommendedName>
</protein>
<dbReference type="EMBL" id="CH480815">
    <property type="protein sequence ID" value="EDW41628.1"/>
    <property type="molecule type" value="Genomic_DNA"/>
</dbReference>
<dbReference type="RefSeq" id="XP_002030642.1">
    <property type="nucleotide sequence ID" value="XM_002030606.1"/>
</dbReference>
<dbReference type="STRING" id="7238.B4HIJ8"/>
<dbReference type="EnsemblMetazoa" id="FBtr0207449">
    <property type="protein sequence ID" value="FBpp0205941"/>
    <property type="gene ID" value="FBgn0179327"/>
</dbReference>
<dbReference type="GeneID" id="6605827"/>
<dbReference type="KEGG" id="dse:6605827"/>
<dbReference type="CTD" id="39720"/>
<dbReference type="HOGENOM" id="CLU_108196_0_0_1"/>
<dbReference type="OMA" id="YWQKAAL"/>
<dbReference type="PhylomeDB" id="B4HIJ8"/>
<dbReference type="Proteomes" id="UP000001292">
    <property type="component" value="Unassembled WGS sequence"/>
</dbReference>
<dbReference type="GO" id="GO:0042995">
    <property type="term" value="C:cell projection"/>
    <property type="evidence" value="ECO:0007669"/>
    <property type="project" value="UniProtKB-KW"/>
</dbReference>
<dbReference type="GO" id="GO:0005768">
    <property type="term" value="C:endosome"/>
    <property type="evidence" value="ECO:0007669"/>
    <property type="project" value="UniProtKB-SubCell"/>
</dbReference>
<dbReference type="GO" id="GO:0042734">
    <property type="term" value="C:presynaptic membrane"/>
    <property type="evidence" value="ECO:0007669"/>
    <property type="project" value="UniProtKB-SubCell"/>
</dbReference>
<dbReference type="GO" id="GO:0030672">
    <property type="term" value="C:synaptic vesicle membrane"/>
    <property type="evidence" value="ECO:0000250"/>
    <property type="project" value="UniProtKB"/>
</dbReference>
<dbReference type="GO" id="GO:0005262">
    <property type="term" value="F:calcium channel activity"/>
    <property type="evidence" value="ECO:0007669"/>
    <property type="project" value="UniProtKB-KW"/>
</dbReference>
<dbReference type="GO" id="GO:0042802">
    <property type="term" value="F:identical protein binding"/>
    <property type="evidence" value="ECO:0007669"/>
    <property type="project" value="EnsemblMetazoa"/>
</dbReference>
<dbReference type="GO" id="GO:0150008">
    <property type="term" value="P:bulk synaptic vesicle endocytosis"/>
    <property type="evidence" value="ECO:0007669"/>
    <property type="project" value="EnsemblMetazoa"/>
</dbReference>
<dbReference type="GO" id="GO:0035212">
    <property type="term" value="P:cell competition in a multicellular organism"/>
    <property type="evidence" value="ECO:0007669"/>
    <property type="project" value="EnsemblMetazoa"/>
</dbReference>
<dbReference type="GO" id="GO:0150007">
    <property type="term" value="P:clathrin-dependent synaptic vesicle endocytosis"/>
    <property type="evidence" value="ECO:0007669"/>
    <property type="project" value="EnsemblMetazoa"/>
</dbReference>
<dbReference type="GO" id="GO:0046530">
    <property type="term" value="P:photoreceptor cell differentiation"/>
    <property type="evidence" value="ECO:0000250"/>
    <property type="project" value="UniProtKB"/>
</dbReference>
<dbReference type="GO" id="GO:0043525">
    <property type="term" value="P:positive regulation of neuron apoptotic process"/>
    <property type="evidence" value="ECO:0007669"/>
    <property type="project" value="EnsemblMetazoa"/>
</dbReference>
<dbReference type="GO" id="GO:0099533">
    <property type="term" value="P:positive regulation of presynaptic cytosolic calcium concentration"/>
    <property type="evidence" value="ECO:0007669"/>
    <property type="project" value="EnsemblMetazoa"/>
</dbReference>
<dbReference type="GO" id="GO:0048488">
    <property type="term" value="P:synaptic vesicle endocytosis"/>
    <property type="evidence" value="ECO:0000250"/>
    <property type="project" value="UniProtKB"/>
</dbReference>
<dbReference type="InterPro" id="IPR019365">
    <property type="entry name" value="TVP18/Ca-channel_flower"/>
</dbReference>
<dbReference type="PANTHER" id="PTHR13314">
    <property type="entry name" value="CALCIUM CHANNEL FLOWER HOMOLOG"/>
    <property type="match status" value="1"/>
</dbReference>
<dbReference type="PANTHER" id="PTHR13314:SF2">
    <property type="entry name" value="CALCIUM CHANNEL FLOWER HOMOLOG"/>
    <property type="match status" value="1"/>
</dbReference>
<dbReference type="Pfam" id="PF10233">
    <property type="entry name" value="Cg6151-P"/>
    <property type="match status" value="1"/>
</dbReference>
<dbReference type="SMART" id="SM01077">
    <property type="entry name" value="Cg6151-P"/>
    <property type="match status" value="1"/>
</dbReference>
<keyword id="KW-0106">Calcium</keyword>
<keyword id="KW-0107">Calcium channel</keyword>
<keyword id="KW-0109">Calcium transport</keyword>
<keyword id="KW-1003">Cell membrane</keyword>
<keyword id="KW-0966">Cell projection</keyword>
<keyword id="KW-0968">Cytoplasmic vesicle</keyword>
<keyword id="KW-0254">Endocytosis</keyword>
<keyword id="KW-0967">Endosome</keyword>
<keyword id="KW-0407">Ion channel</keyword>
<keyword id="KW-0406">Ion transport</keyword>
<keyword id="KW-0472">Membrane</keyword>
<keyword id="KW-1185">Reference proteome</keyword>
<keyword id="KW-0770">Synapse</keyword>
<keyword id="KW-0812">Transmembrane</keyword>
<keyword id="KW-1133">Transmembrane helix</keyword>
<keyword id="KW-0813">Transport</keyword>
<comment type="function">
    <text evidence="1">Transmembrane protein which mediates synaptic endocytosis, fitness-based cell culling, neuronal culling, morphogen gradient scaling, and calcium transport. Regulates synaptic endocytosis and hence couples exo- with endocytosis. Controls two major modes of synaptic vesicle (SV) endocytosis in the synaptic boutons of neuromuscular junctions (NMJs); Ca(2+) channel-independent Clathrin-mediated endocytosis (CME) in response to mild stimulation, and Ca(2+) channel-dependent activity-dependent bulk endocytosis (ADBE) in response to strong stimulation. Functions in ADBE and subsequent SV reformation from bulk endosomes by initiating Ca(2+) channel-dependent phosphatidylinositol 4,5-bisphosphate (PtdIns(4,5)P2) compartmentalization in synaptic boutons. There it acts at the periactive zone to provide the low Ca(2+) levels required to initiate Calcineurin activation and upregulate PtdIns(4,5)P2. Conversely PtdIns(4,5)P2 enhances fwe Ca(2+) channel-activity, establishing a positive feedback loop that induces PtdIns(4,5)P2 microdomain at the periactive zone. These microdomains trigger bulk membrane invagination (i.e. ADBE) by triggering actin polymerization while also promoting localization of fwe to bulk endosomes, thereby removing the ADBE trigger to reduce endocytosis and prevent excess membrane uptake. PtdIns(4,5)P2 then promotes SV reformation from the bulk endosomes, to coordinate ADBE and subsequent SV reformation. Different combinations of the flower isoforms at the cell membrane are also required for the identification and elimination of suboptimal or supernumerary cells during development, regeneration, and adulthood. Required for the recognition and elimination of unfit cells in the developing wing during cell competition. In the developing pupal retina, mediates the elimination of unwanted postmitotic neurons, including supernumerary photoreceptor neurons that form at the periphery of the retina and are contained within incomplete ommatidia units. Also required for efficient elimination and replacement of old neurons by newly generated neurons during regeneration in the adult brain following mechanical injury. Downstream of the flower fitness fingerprints, cells identified as unwanted or unfit are eliminated via apoptosis through the expression of ahuizotl (azot). However, the cells marked for elimination by the flower isoforms only undergo apoptosis if additional thresholds are met; (1) their neighboring fit/healthy cells express different levels of the fwe isoforms, and (2) the levels of the protective signal SPARC expressed by the loser or unwanted cells are unable to inhibit caspase activation. These additional thresholds for flower-mediated apoptosis, allows useful cells to recover from transient and limited stress before they are unnecessarily eliminated. Functions with dally and magu in a mechanism of scaling, which utilises apoptosis to ensure that the dpp morphogen gradient, which mediates organ growth, remains proportional to the size of the growing wing. In this mechanism, fwe represses dally- and Magu-dependent activity in expanding the gradient, and dally/Magu inhibits fwe-dependent apoptosis to keep cell death rate low. When the levels of these different proteins are optimally regulated the gradient correctly scales with organ growth but when this fails, fwe-mediated apoptosis is activated to trim the developing tissue to match the correct size of the gradient.</text>
</comment>
<comment type="activity regulation">
    <text evidence="1">Channel activity is inhibited by La(3+), which reduces Ca(2+) influx and thus inhibits it's function in promoting activity-dependent bulk endocytosis (ADBE) in response to high stimuli.</text>
</comment>
<comment type="subunit">
    <text evidence="1">Homomultimer. Associates with the dally/ magu complex.</text>
</comment>
<comment type="subcellular location">
    <subcellularLocation>
        <location evidence="2">Cell membrane</location>
        <topology evidence="2">Multi-pass membrane protein</topology>
    </subcellularLocation>
    <subcellularLocation>
        <location evidence="1">Cytoplasmic vesicle</location>
        <location evidence="1">Secretory vesicle</location>
        <location evidence="1">Synaptic vesicle membrane</location>
        <topology evidence="1">Multi-pass membrane protein</topology>
    </subcellularLocation>
    <subcellularLocation>
        <location evidence="1">Presynaptic cell membrane</location>
    </subcellularLocation>
    <subcellularLocation>
        <location evidence="1">Endosome</location>
    </subcellularLocation>
    <text evidence="1">Upon fusion of the synaptic vesicle (SV) with the presynaptic membrane, protein transfers from the SV to the periactive zones where endocytosis is known to occur. Upon high K(+) stimulation, expression levels in NMJ boutons are higher in bulk endosomes than in synaptic vesicles, suggesting that it is recycled to bulk endosomes after it activates ADBE.</text>
</comment>
<comment type="similarity">
    <text evidence="3">Belongs to the calcium channel flower family.</text>
</comment>
<name>FLOWR_DROSE</name>
<reference evidence="4" key="1">
    <citation type="journal article" date="2007" name="Nature">
        <title>Evolution of genes and genomes on the Drosophila phylogeny.</title>
        <authorList>
            <consortium name="Drosophila 12 genomes consortium"/>
        </authorList>
    </citation>
    <scope>NUCLEOTIDE SEQUENCE [LARGE SCALE GENOMIC DNA]</scope>
    <source>
        <strain evidence="4">Rob3c / Tucson 14021-0248.25</strain>
    </source>
</reference>
<proteinExistence type="inferred from homology"/>